<keyword id="KW-0903">Direct protein sequencing</keyword>
<keyword id="KW-1015">Disulfide bond</keyword>
<keyword id="KW-0325">Glycoprotein</keyword>
<keyword id="KW-0597">Phosphoprotein</keyword>
<keyword id="KW-1185">Reference proteome</keyword>
<keyword id="KW-0964">Secreted</keyword>
<keyword id="KW-0711">Selenium</keyword>
<keyword id="KW-0712">Selenocysteine</keyword>
<keyword id="KW-0732">Signal</keyword>
<accession>P25236</accession>
<dbReference type="EMBL" id="M63574">
    <property type="protein sequence ID" value="AAA42129.2"/>
    <property type="molecule type" value="mRNA"/>
</dbReference>
<dbReference type="EMBL" id="D25221">
    <property type="protein sequence ID" value="BAA04950.2"/>
    <property type="molecule type" value="mRNA"/>
</dbReference>
<dbReference type="EMBL" id="BC072539">
    <property type="protein sequence ID" value="AAH72539.1"/>
    <property type="molecule type" value="mRNA"/>
</dbReference>
<dbReference type="PIR" id="A40380">
    <property type="entry name" value="OMRTSP"/>
</dbReference>
<dbReference type="RefSeq" id="NP_001077380.1">
    <property type="nucleotide sequence ID" value="NM_001083911.1"/>
</dbReference>
<dbReference type="RefSeq" id="NP_062065.2">
    <property type="nucleotide sequence ID" value="NM_019192.2"/>
</dbReference>
<dbReference type="FunCoup" id="P25236">
    <property type="interactions" value="243"/>
</dbReference>
<dbReference type="STRING" id="10116.ENSRNOP00000069020"/>
<dbReference type="GlyCosmos" id="P25236">
    <property type="glycosylation" value="4 sites, No reported glycans"/>
</dbReference>
<dbReference type="GlyGen" id="P25236">
    <property type="glycosylation" value="4 sites"/>
</dbReference>
<dbReference type="iPTMnet" id="P25236"/>
<dbReference type="PhosphoSitePlus" id="P25236"/>
<dbReference type="SwissPalm" id="P25236"/>
<dbReference type="Ensembl" id="ENSRNOT00000086590.2">
    <property type="protein sequence ID" value="ENSRNOP00000069020.2"/>
    <property type="gene ID" value="ENSRNOG00000053086.2"/>
</dbReference>
<dbReference type="GeneID" id="29360"/>
<dbReference type="KEGG" id="rno:29360"/>
<dbReference type="AGR" id="RGD:3660"/>
<dbReference type="CTD" id="6414"/>
<dbReference type="RGD" id="3660">
    <property type="gene designation" value="Selenop"/>
</dbReference>
<dbReference type="GeneTree" id="ENSGT00510000049326"/>
<dbReference type="InParanoid" id="P25236"/>
<dbReference type="OMA" id="XQASQQL"/>
<dbReference type="OrthoDB" id="6134775at2759"/>
<dbReference type="PhylomeDB" id="P25236"/>
<dbReference type="Reactome" id="R-RNO-114608">
    <property type="pathway name" value="Platelet degranulation"/>
</dbReference>
<dbReference type="PRO" id="PR:P25236"/>
<dbReference type="Proteomes" id="UP000002494">
    <property type="component" value="Chromosome 2"/>
</dbReference>
<dbReference type="GO" id="GO:0005576">
    <property type="term" value="C:extracellular region"/>
    <property type="evidence" value="ECO:0000318"/>
    <property type="project" value="GO_Central"/>
</dbReference>
<dbReference type="GO" id="GO:0005615">
    <property type="term" value="C:extracellular space"/>
    <property type="evidence" value="ECO:0000266"/>
    <property type="project" value="RGD"/>
</dbReference>
<dbReference type="GO" id="GO:0008430">
    <property type="term" value="F:selenium binding"/>
    <property type="evidence" value="ECO:0000266"/>
    <property type="project" value="RGD"/>
</dbReference>
<dbReference type="GO" id="GO:0007420">
    <property type="term" value="P:brain development"/>
    <property type="evidence" value="ECO:0000266"/>
    <property type="project" value="RGD"/>
</dbReference>
<dbReference type="GO" id="GO:0007626">
    <property type="term" value="P:locomotory behavior"/>
    <property type="evidence" value="ECO:0000266"/>
    <property type="project" value="RGD"/>
</dbReference>
<dbReference type="GO" id="GO:0009791">
    <property type="term" value="P:post-embryonic development"/>
    <property type="evidence" value="ECO:0000266"/>
    <property type="project" value="RGD"/>
</dbReference>
<dbReference type="GO" id="GO:0040008">
    <property type="term" value="P:regulation of growth"/>
    <property type="evidence" value="ECO:0000266"/>
    <property type="project" value="RGD"/>
</dbReference>
<dbReference type="GO" id="GO:0010269">
    <property type="term" value="P:response to selenium ion"/>
    <property type="evidence" value="ECO:0000270"/>
    <property type="project" value="RGD"/>
</dbReference>
<dbReference type="GO" id="GO:0001887">
    <property type="term" value="P:selenium compound metabolic process"/>
    <property type="evidence" value="ECO:0000266"/>
    <property type="project" value="RGD"/>
</dbReference>
<dbReference type="GO" id="GO:0019953">
    <property type="term" value="P:sexual reproduction"/>
    <property type="evidence" value="ECO:0000266"/>
    <property type="project" value="RGD"/>
</dbReference>
<dbReference type="InterPro" id="IPR007671">
    <property type="entry name" value="Selenoprotein-P_N"/>
</dbReference>
<dbReference type="InterPro" id="IPR007672">
    <property type="entry name" value="SelP_C"/>
</dbReference>
<dbReference type="InterPro" id="IPR037941">
    <property type="entry name" value="SeP"/>
</dbReference>
<dbReference type="PANTHER" id="PTHR10105">
    <property type="entry name" value="SELENOPROTEIN P"/>
    <property type="match status" value="1"/>
</dbReference>
<dbReference type="PANTHER" id="PTHR10105:SF3">
    <property type="entry name" value="SELENOPROTEIN P"/>
    <property type="match status" value="1"/>
</dbReference>
<dbReference type="Pfam" id="PF04593">
    <property type="entry name" value="SelP_C"/>
    <property type="match status" value="1"/>
</dbReference>
<dbReference type="Pfam" id="PF04592">
    <property type="entry name" value="SelP_N"/>
    <property type="match status" value="1"/>
</dbReference>
<reference key="1">
    <citation type="journal article" date="1991" name="J. Biol. Chem.">
        <title>The cDNA for rat selenoprotein P contains 10 TGA codons in the open reading frame.</title>
        <authorList>
            <person name="Hill K.E."/>
            <person name="Lloyd R.S."/>
            <person name="Yang J.-G."/>
            <person name="Read R."/>
            <person name="Burk R.F."/>
        </authorList>
    </citation>
    <scope>NUCLEOTIDE SEQUENCE [MRNA]</scope>
    <scope>PROTEIN SEQUENCE OF 20-41; 267-287 AND 316-327</scope>
    <scope>SUBCELLULAR LOCATION</scope>
    <source>
        <tissue>Liver</tissue>
    </source>
</reference>
<reference key="2">
    <citation type="journal article" date="1995" name="Brain Res. Mol. Brain Res.">
        <title>Molecular cloning of cDNA encoding a bovine selenoprotein P-like protein containing 12 selenocysteines and a (His-Pro) rich domain insertion, and its regional expression.</title>
        <authorList>
            <person name="Saijoh K."/>
            <person name="Saito N."/>
            <person name="Lee M.J."/>
            <person name="Fujii M."/>
            <person name="Kobayashi T."/>
            <person name="Sumino K."/>
        </authorList>
    </citation>
    <scope>NUCLEOTIDE SEQUENCE [MRNA]</scope>
    <source>
        <strain>Wistar</strain>
        <tissue>Kidney</tissue>
    </source>
</reference>
<reference key="3">
    <citation type="journal article" date="2004" name="Genome Res.">
        <title>The status, quality, and expansion of the NIH full-length cDNA project: the Mammalian Gene Collection (MGC).</title>
        <authorList>
            <consortium name="The MGC Project Team"/>
        </authorList>
    </citation>
    <scope>NUCLEOTIDE SEQUENCE [LARGE SCALE MRNA]</scope>
    <source>
        <tissue>Heart</tissue>
    </source>
</reference>
<reference key="4">
    <citation type="journal article" date="2002" name="J. Biol. Chem.">
        <title>Mass spectrometric characterization of full-length rat selenoprotein P and three isoforms shortened at the C-terminus. Evidence that three UGA codons in the mRNA open reading frame have alternative functions of specifying selenocysteine insertion or translation termination.</title>
        <authorList>
            <person name="Ma S."/>
            <person name="Hill K.E."/>
            <person name="Caprioli R.M."/>
            <person name="Burk R.F."/>
        </authorList>
    </citation>
    <scope>CHARACTERIZATION OF ISOFORMS</scope>
</reference>
<reference key="5">
    <citation type="journal article" date="2003" name="Biochemistry">
        <title>Mass spectrometric identification of N- and O-glycosylation sites of full-length rat selenoprotein P and determination of selenide-sulfide and disulfide linkages in the shortest isoform.</title>
        <authorList>
            <person name="Ma S."/>
            <person name="Hill K.E."/>
            <person name="Burk R.F."/>
            <person name="Caprioli R.M."/>
        </authorList>
    </citation>
    <scope>GLYCOSYLATION AT ASN-83; ASN-174; ASN-188 AND THR-365</scope>
    <scope>LACK OF GLYCOSYLATION AT ASN-370 AND ASN-375</scope>
    <scope>DISULFIDE BONDS</scope>
</reference>
<reference key="6">
    <citation type="journal article" date="1994" name="J. Nutr.">
        <title>Selenoprotein P. A selenium-rich extracellular glycoprotein.</title>
        <authorList>
            <person name="Burk R.F."/>
            <person name="Hill K.E."/>
        </authorList>
    </citation>
    <scope>REVIEW</scope>
</reference>
<organism>
    <name type="scientific">Rattus norvegicus</name>
    <name type="common">Rat</name>
    <dbReference type="NCBI Taxonomy" id="10116"/>
    <lineage>
        <taxon>Eukaryota</taxon>
        <taxon>Metazoa</taxon>
        <taxon>Chordata</taxon>
        <taxon>Craniata</taxon>
        <taxon>Vertebrata</taxon>
        <taxon>Euteleostomi</taxon>
        <taxon>Mammalia</taxon>
        <taxon>Eutheria</taxon>
        <taxon>Euarchontoglires</taxon>
        <taxon>Glires</taxon>
        <taxon>Rodentia</taxon>
        <taxon>Myomorpha</taxon>
        <taxon>Muroidea</taxon>
        <taxon>Muridae</taxon>
        <taxon>Murinae</taxon>
        <taxon>Rattus</taxon>
    </lineage>
</organism>
<name>SEPP1_RAT</name>
<gene>
    <name evidence="9" type="primary">Selenop</name>
    <name evidence="9" type="synonym">Selp</name>
    <name type="synonym">Sepp1</name>
</gene>
<feature type="signal peptide" evidence="6">
    <location>
        <begin position="1"/>
        <end position="19"/>
    </location>
</feature>
<feature type="chain" id="PRO_0000022316" description="Selenoprotein Se-P10">
    <location>
        <begin position="20"/>
        <end position="385"/>
    </location>
</feature>
<feature type="chain" id="PRO_0000022317" description="Selenoprotein Se-P6">
    <location>
        <begin position="20"/>
        <end position="370"/>
    </location>
</feature>
<feature type="chain" id="PRO_0000022318" description="Selenoprotein Se-P2">
    <location>
        <begin position="20"/>
        <end position="281"/>
    </location>
</feature>
<feature type="chain" id="PRO_0000022319" description="Selenoprotein Se-P1">
    <location>
        <begin position="20"/>
        <end position="263"/>
    </location>
</feature>
<feature type="region of interest" description="Disordered" evidence="4">
    <location>
        <begin position="196"/>
        <end position="262"/>
    </location>
</feature>
<feature type="region of interest" description="Disordered" evidence="4">
    <location>
        <begin position="357"/>
        <end position="385"/>
    </location>
</feature>
<feature type="compositionally biased region" description="Basic residues" evidence="4">
    <location>
        <begin position="243"/>
        <end position="258"/>
    </location>
</feature>
<feature type="compositionally biased region" description="Polar residues" evidence="4">
    <location>
        <begin position="360"/>
        <end position="369"/>
    </location>
</feature>
<feature type="compositionally biased region" description="Basic residues" evidence="4">
    <location>
        <begin position="376"/>
        <end position="385"/>
    </location>
</feature>
<feature type="site" description="Not glycosylated" evidence="5">
    <location>
        <position position="370"/>
    </location>
</feature>
<feature type="site" description="Not glycosylated" evidence="5">
    <location>
        <position position="375"/>
    </location>
</feature>
<feature type="non-standard amino acid" description="Selenocysteine">
    <location>
        <position position="59"/>
    </location>
</feature>
<feature type="non-standard amino acid" description="Selenocysteine">
    <location>
        <position position="264"/>
    </location>
</feature>
<feature type="non-standard amino acid" description="Selenocysteine">
    <location>
        <position position="282"/>
    </location>
</feature>
<feature type="non-standard amino acid" description="Selenocysteine">
    <location>
        <position position="323"/>
    </location>
</feature>
<feature type="non-standard amino acid" description="Selenocysteine">
    <location>
        <position position="335"/>
    </location>
</feature>
<feature type="non-standard amino acid" description="Selenocysteine">
    <location>
        <position position="357"/>
    </location>
</feature>
<feature type="non-standard amino acid" description="Selenocysteine">
    <location>
        <position position="371"/>
    </location>
</feature>
<feature type="non-standard amino acid" description="Selenocysteine">
    <location>
        <position position="373"/>
    </location>
</feature>
<feature type="non-standard amino acid" description="Selenocysteine">
    <location>
        <position position="380"/>
    </location>
</feature>
<feature type="non-standard amino acid" description="Selenocysteine">
    <location>
        <position position="382"/>
    </location>
</feature>
<feature type="modified residue" description="Phosphoserine" evidence="2">
    <location>
        <position position="269"/>
    </location>
</feature>
<feature type="glycosylation site" description="N-linked (GlcNAc...) asparagine" evidence="5">
    <location>
        <position position="83"/>
    </location>
</feature>
<feature type="glycosylation site" description="N-linked (GlcNAc...) asparagine" evidence="5">
    <location>
        <position position="174"/>
    </location>
</feature>
<feature type="glycosylation site" description="N-linked (GlcNAc...) asparagine" evidence="5">
    <location>
        <position position="188"/>
    </location>
</feature>
<feature type="glycosylation site" description="O-linked (Hex...) threonine; partial" evidence="5">
    <location>
        <position position="365"/>
    </location>
</feature>
<feature type="disulfide bond" description="In isoform Se-P1" evidence="5">
    <location>
        <begin position="168"/>
        <end position="186"/>
    </location>
</feature>
<feature type="disulfide bond" description="In isoform Se-P1" evidence="5">
    <location>
        <begin position="172"/>
        <end position="175"/>
    </location>
</feature>
<feature type="cross-link" description="Cysteinyl-selenocysteine (Sec-Cys); in isoform Se-P1">
    <location>
        <begin position="59"/>
        <end position="62"/>
    </location>
</feature>
<evidence type="ECO:0000250" key="1"/>
<evidence type="ECO:0000250" key="2">
    <source>
        <dbReference type="UniProtKB" id="P49908"/>
    </source>
</evidence>
<evidence type="ECO:0000250" key="3">
    <source>
        <dbReference type="UniProtKB" id="P70274"/>
    </source>
</evidence>
<evidence type="ECO:0000256" key="4">
    <source>
        <dbReference type="SAM" id="MobiDB-lite"/>
    </source>
</evidence>
<evidence type="ECO:0000269" key="5">
    <source>
    </source>
</evidence>
<evidence type="ECO:0000269" key="6">
    <source>
    </source>
</evidence>
<evidence type="ECO:0000303" key="7">
    <source>
    </source>
</evidence>
<evidence type="ECO:0000305" key="8"/>
<evidence type="ECO:0000312" key="9">
    <source>
        <dbReference type="RGD" id="3660"/>
    </source>
</evidence>
<proteinExistence type="evidence at protein level"/>
<sequence>MWRSLGLALALCLLPYGGAESQGQSPACKQAPPWNIGDQNPMLNSEGTVTVVALLQASUYLCLLQASRLEDLRIKLENQGYFNISYIVVNHQGSPSQLKHAHLKKQVSDHIAVYRQDEHQTDVWTLLNGNKDDFLIYDRCGRLVYHLGLPYSFLTFPYVEEAIKIAYCEKRCGNCSFTSLEDEAFCKNVSSATASKTTEPSEEHNHHKHHDKHGHEHLGSSKPSENQQPGALDVETSLPPSGLHHHHHHHKHKGQHRQGHLESUDMGASEGLQLSLAQRKLURRGCINQLLCKLSEESGAATSSCCCHCRHLIFEKSGSAITUQCAENLPSLCSUQGLFAEEKVIESCQCRSPPAAUHSQHVSPTEASPNUSUNNKTKKUKUNLN</sequence>
<protein>
    <recommendedName>
        <fullName evidence="7">Selenoprotein P</fullName>
        <shortName>SeP</shortName>
    </recommendedName>
    <component>
        <recommendedName>
            <fullName>Selenoprotein Se-P10</fullName>
        </recommendedName>
    </component>
    <component>
        <recommendedName>
            <fullName>Selenoprotein Se-P6</fullName>
        </recommendedName>
    </component>
    <component>
        <recommendedName>
            <fullName>Selenoprotein Se-P2</fullName>
        </recommendedName>
    </component>
    <component>
        <recommendedName>
            <fullName>Selenoprotein Se-P1</fullName>
        </recommendedName>
    </component>
</protein>
<comment type="function">
    <text>Might be responsible for some of the extracellular antioxidant defense properties of selenium or might be involved in the transport of selenium. May supply selenium to tissues such as brain and testis.</text>
</comment>
<comment type="subcellular location">
    <subcellularLocation>
        <location evidence="6">Secreted</location>
    </subcellularLocation>
    <text evidence="3">Passes from plasma into the glomerular filtrate where it is removed by endocytosis mediated by LRP2 in the proximal tubule epithelium.</text>
</comment>
<comment type="tissue specificity">
    <text>Widely expressed, mainly by the liver. Secreted in plasma.</text>
</comment>
<comment type="domain">
    <text evidence="3">The C-terminus is not required for endocytic uptake in the proximal tubule epithelium.</text>
</comment>
<comment type="PTM">
    <text>Isoform Se-P1 contains several disulfide bridges and a selenide-sulfide bond between Sec-59 and Cys-62. These bonds are speculated to serve as redox-active pairs.</text>
</comment>
<comment type="PTM">
    <text evidence="1">Phosphorylation sites are present in the extracellular medium.</text>
</comment>
<comment type="miscellaneous">
    <text>Plasma contains 4 isoforms, which are named isoforms Se-P10, Se-P6, Se-P2 and Se-P1, according to the number of selenocysteines they contain. All isoforms arise from the same mRNA. The 3 shortened isoforms terminated at the opal stop codons at positions 264, 282, 371, when selenocysteine has not been inserted.</text>
</comment>
<comment type="similarity">
    <text evidence="8">Belongs to the selenoprotein P family.</text>
</comment>